<evidence type="ECO:0000255" key="1">
    <source>
        <dbReference type="HAMAP-Rule" id="MF_01043"/>
    </source>
</evidence>
<name>PLSY_EHRRG</name>
<proteinExistence type="inferred from homology"/>
<comment type="function">
    <text evidence="1">Catalyzes the transfer of an acyl group from acyl-phosphate (acyl-PO(4)) to glycerol-3-phosphate (G3P) to form lysophosphatidic acid (LPA). This enzyme utilizes acyl-phosphate as fatty acyl donor, but not acyl-CoA or acyl-ACP.</text>
</comment>
<comment type="catalytic activity">
    <reaction evidence="1">
        <text>an acyl phosphate + sn-glycerol 3-phosphate = a 1-acyl-sn-glycero-3-phosphate + phosphate</text>
        <dbReference type="Rhea" id="RHEA:34075"/>
        <dbReference type="ChEBI" id="CHEBI:43474"/>
        <dbReference type="ChEBI" id="CHEBI:57597"/>
        <dbReference type="ChEBI" id="CHEBI:57970"/>
        <dbReference type="ChEBI" id="CHEBI:59918"/>
        <dbReference type="EC" id="2.3.1.275"/>
    </reaction>
</comment>
<comment type="pathway">
    <text evidence="1">Lipid metabolism; phospholipid metabolism.</text>
</comment>
<comment type="subunit">
    <text evidence="1">Probably interacts with PlsX.</text>
</comment>
<comment type="subcellular location">
    <subcellularLocation>
        <location evidence="1">Cell inner membrane</location>
        <topology evidence="1">Multi-pass membrane protein</topology>
    </subcellularLocation>
</comment>
<comment type="similarity">
    <text evidence="1">Belongs to the PlsY family.</text>
</comment>
<sequence length="195" mass="21735">MDFQVVIFILCYFIGSIPFGFILSYVTGIGDIRKTGSGNIGATNVFRKNKKLALLTLLLDALKSFICVAIAQKYNIDNTILFLAALFAIIGHMFPVYLFFKGGKGVAPLLGSLIFIDYKVALCFLTFWIICFLLCKYASLSSIVSTLIALLFICTYYTIVQSVIFAITALLIITQHTDNIIRMLNKSENKINLKL</sequence>
<keyword id="KW-0997">Cell inner membrane</keyword>
<keyword id="KW-1003">Cell membrane</keyword>
<keyword id="KW-0444">Lipid biosynthesis</keyword>
<keyword id="KW-0443">Lipid metabolism</keyword>
<keyword id="KW-0472">Membrane</keyword>
<keyword id="KW-0594">Phospholipid biosynthesis</keyword>
<keyword id="KW-1208">Phospholipid metabolism</keyword>
<keyword id="KW-0808">Transferase</keyword>
<keyword id="KW-0812">Transmembrane</keyword>
<keyword id="KW-1133">Transmembrane helix</keyword>
<feature type="chain" id="PRO_0000188364" description="Glycerol-3-phosphate acyltransferase">
    <location>
        <begin position="1"/>
        <end position="195"/>
    </location>
</feature>
<feature type="transmembrane region" description="Helical" evidence="1">
    <location>
        <begin position="3"/>
        <end position="23"/>
    </location>
</feature>
<feature type="transmembrane region" description="Helical" evidence="1">
    <location>
        <begin position="52"/>
        <end position="72"/>
    </location>
</feature>
<feature type="transmembrane region" description="Helical" evidence="1">
    <location>
        <begin position="80"/>
        <end position="100"/>
    </location>
</feature>
<feature type="transmembrane region" description="Helical" evidence="1">
    <location>
        <begin position="113"/>
        <end position="133"/>
    </location>
</feature>
<feature type="transmembrane region" description="Helical" evidence="1">
    <location>
        <begin position="147"/>
        <end position="167"/>
    </location>
</feature>
<dbReference type="EC" id="2.3.1.275" evidence="1"/>
<dbReference type="EMBL" id="CR925677">
    <property type="protein sequence ID" value="CAI27454.1"/>
    <property type="molecule type" value="Genomic_DNA"/>
</dbReference>
<dbReference type="RefSeq" id="WP_011255220.1">
    <property type="nucleotide sequence ID" value="NC_006831.1"/>
</dbReference>
<dbReference type="SMR" id="Q5FF11"/>
<dbReference type="KEGG" id="erg:ERGA_CDS_00020"/>
<dbReference type="HOGENOM" id="CLU_081254_0_0_5"/>
<dbReference type="OrthoDB" id="9777124at2"/>
<dbReference type="UniPathway" id="UPA00085"/>
<dbReference type="Proteomes" id="UP000000533">
    <property type="component" value="Chromosome"/>
</dbReference>
<dbReference type="GO" id="GO:0005886">
    <property type="term" value="C:plasma membrane"/>
    <property type="evidence" value="ECO:0007669"/>
    <property type="project" value="UniProtKB-SubCell"/>
</dbReference>
<dbReference type="GO" id="GO:0043772">
    <property type="term" value="F:acyl-phosphate glycerol-3-phosphate acyltransferase activity"/>
    <property type="evidence" value="ECO:0007669"/>
    <property type="project" value="UniProtKB-UniRule"/>
</dbReference>
<dbReference type="GO" id="GO:0008654">
    <property type="term" value="P:phospholipid biosynthetic process"/>
    <property type="evidence" value="ECO:0007669"/>
    <property type="project" value="UniProtKB-UniRule"/>
</dbReference>
<dbReference type="HAMAP" id="MF_01043">
    <property type="entry name" value="PlsY"/>
    <property type="match status" value="1"/>
</dbReference>
<dbReference type="InterPro" id="IPR003811">
    <property type="entry name" value="G3P_acylTferase_PlsY"/>
</dbReference>
<dbReference type="NCBIfam" id="TIGR00023">
    <property type="entry name" value="glycerol-3-phosphate 1-O-acyltransferase PlsY"/>
    <property type="match status" value="1"/>
</dbReference>
<dbReference type="PANTHER" id="PTHR30309:SF0">
    <property type="entry name" value="GLYCEROL-3-PHOSPHATE ACYLTRANSFERASE-RELATED"/>
    <property type="match status" value="1"/>
</dbReference>
<dbReference type="PANTHER" id="PTHR30309">
    <property type="entry name" value="INNER MEMBRANE PROTEIN YGIH"/>
    <property type="match status" value="1"/>
</dbReference>
<dbReference type="Pfam" id="PF02660">
    <property type="entry name" value="G3P_acyltransf"/>
    <property type="match status" value="1"/>
</dbReference>
<dbReference type="SMART" id="SM01207">
    <property type="entry name" value="G3P_acyltransf"/>
    <property type="match status" value="1"/>
</dbReference>
<gene>
    <name evidence="1" type="primary">plsY</name>
    <name type="ordered locus">ERGA_CDS_00020</name>
</gene>
<accession>Q5FF11</accession>
<protein>
    <recommendedName>
        <fullName evidence="1">Glycerol-3-phosphate acyltransferase</fullName>
    </recommendedName>
    <alternativeName>
        <fullName evidence="1">Acyl-PO4 G3P acyltransferase</fullName>
    </alternativeName>
    <alternativeName>
        <fullName evidence="1">Acyl-phosphate--glycerol-3-phosphate acyltransferase</fullName>
    </alternativeName>
    <alternativeName>
        <fullName evidence="1">G3P acyltransferase</fullName>
        <shortName evidence="1">GPAT</shortName>
        <ecNumber evidence="1">2.3.1.275</ecNumber>
    </alternativeName>
    <alternativeName>
        <fullName evidence="1">Lysophosphatidic acid synthase</fullName>
        <shortName evidence="1">LPA synthase</shortName>
    </alternativeName>
</protein>
<reference key="1">
    <citation type="journal article" date="2006" name="J. Bacteriol.">
        <title>Comparative genomic analysis of three strains of Ehrlichia ruminantium reveals an active process of genome size plasticity.</title>
        <authorList>
            <person name="Frutos R."/>
            <person name="Viari A."/>
            <person name="Ferraz C."/>
            <person name="Morgat A."/>
            <person name="Eychenie S."/>
            <person name="Kandassamy Y."/>
            <person name="Chantal I."/>
            <person name="Bensaid A."/>
            <person name="Coissac E."/>
            <person name="Vachiery N."/>
            <person name="Demaille J."/>
            <person name="Martinez D."/>
        </authorList>
    </citation>
    <scope>NUCLEOTIDE SEQUENCE [LARGE SCALE GENOMIC DNA]</scope>
    <source>
        <strain>Gardel</strain>
    </source>
</reference>
<organism>
    <name type="scientific">Ehrlichia ruminantium (strain Gardel)</name>
    <dbReference type="NCBI Taxonomy" id="302409"/>
    <lineage>
        <taxon>Bacteria</taxon>
        <taxon>Pseudomonadati</taxon>
        <taxon>Pseudomonadota</taxon>
        <taxon>Alphaproteobacteria</taxon>
        <taxon>Rickettsiales</taxon>
        <taxon>Anaplasmataceae</taxon>
        <taxon>Ehrlichia</taxon>
    </lineage>
</organism>